<gene>
    <name evidence="1" type="primary">purM</name>
    <name type="ordered locus">CKL_2686</name>
</gene>
<name>PUR5_CLOK5</name>
<evidence type="ECO:0000255" key="1">
    <source>
        <dbReference type="HAMAP-Rule" id="MF_00741"/>
    </source>
</evidence>
<keyword id="KW-0067">ATP-binding</keyword>
<keyword id="KW-0963">Cytoplasm</keyword>
<keyword id="KW-0436">Ligase</keyword>
<keyword id="KW-0547">Nucleotide-binding</keyword>
<keyword id="KW-0658">Purine biosynthesis</keyword>
<keyword id="KW-1185">Reference proteome</keyword>
<protein>
    <recommendedName>
        <fullName evidence="1">Phosphoribosylformylglycinamidine cyclo-ligase</fullName>
        <ecNumber evidence="1">6.3.3.1</ecNumber>
    </recommendedName>
    <alternativeName>
        <fullName evidence="1">AIR synthase</fullName>
    </alternativeName>
    <alternativeName>
        <fullName evidence="1">AIRS</fullName>
    </alternativeName>
    <alternativeName>
        <fullName evidence="1">Phosphoribosyl-aminoimidazole synthetase</fullName>
    </alternativeName>
</protein>
<reference key="1">
    <citation type="journal article" date="2008" name="Proc. Natl. Acad. Sci. U.S.A.">
        <title>The genome of Clostridium kluyveri, a strict anaerobe with unique metabolic features.</title>
        <authorList>
            <person name="Seedorf H."/>
            <person name="Fricke W.F."/>
            <person name="Veith B."/>
            <person name="Brueggemann H."/>
            <person name="Liesegang H."/>
            <person name="Strittmatter A."/>
            <person name="Miethke M."/>
            <person name="Buckel W."/>
            <person name="Hinderberger J."/>
            <person name="Li F."/>
            <person name="Hagemeier C."/>
            <person name="Thauer R.K."/>
            <person name="Gottschalk G."/>
        </authorList>
    </citation>
    <scope>NUCLEOTIDE SEQUENCE [LARGE SCALE GENOMIC DNA]</scope>
    <source>
        <strain>ATCC 8527 / DSM 555 / NBRC 12016 / NCIMB 10680 / K1</strain>
    </source>
</reference>
<accession>A5N0Q2</accession>
<feature type="chain" id="PRO_1000083454" description="Phosphoribosylformylglycinamidine cyclo-ligase">
    <location>
        <begin position="1"/>
        <end position="331"/>
    </location>
</feature>
<sequence>MVTYKDSGVNIEEGYKSVKLMKEYSAQTFIPGVLNGLGSFAGMFELGKYKNPVLVSGTDGVGTKLKIAFEMKIYDTVGIDCVAMCVNDILCHGAKPLFFLDYLACSNLEAEVAAELVKGISKGCMDAGCALIGGETAEMPGFYSKGEYDMAGFAVGVVEKDNIINGSTVEEGDVLVGIASSGVHSNGYSLVRKLVDNFQVDFFGSALGEVLLTPTRIYVKPVLKLLEKFKIKAMAHITGGGFYENIPRMFKEDFTAVIDKNSFEMPEIFKYIMDLGVDEEHMYNTYNMGIGFVLCVDSKDAPDIIKDLNEMGEKAYIIGHVKRREKRVCLK</sequence>
<proteinExistence type="inferred from homology"/>
<organism>
    <name type="scientific">Clostridium kluyveri (strain ATCC 8527 / DSM 555 / NBRC 12016 / NCIMB 10680 / K1)</name>
    <dbReference type="NCBI Taxonomy" id="431943"/>
    <lineage>
        <taxon>Bacteria</taxon>
        <taxon>Bacillati</taxon>
        <taxon>Bacillota</taxon>
        <taxon>Clostridia</taxon>
        <taxon>Eubacteriales</taxon>
        <taxon>Clostridiaceae</taxon>
        <taxon>Clostridium</taxon>
    </lineage>
</organism>
<comment type="catalytic activity">
    <reaction evidence="1">
        <text>2-formamido-N(1)-(5-O-phospho-beta-D-ribosyl)acetamidine + ATP = 5-amino-1-(5-phospho-beta-D-ribosyl)imidazole + ADP + phosphate + H(+)</text>
        <dbReference type="Rhea" id="RHEA:23032"/>
        <dbReference type="ChEBI" id="CHEBI:15378"/>
        <dbReference type="ChEBI" id="CHEBI:30616"/>
        <dbReference type="ChEBI" id="CHEBI:43474"/>
        <dbReference type="ChEBI" id="CHEBI:137981"/>
        <dbReference type="ChEBI" id="CHEBI:147287"/>
        <dbReference type="ChEBI" id="CHEBI:456216"/>
        <dbReference type="EC" id="6.3.3.1"/>
    </reaction>
</comment>
<comment type="pathway">
    <text evidence="1">Purine metabolism; IMP biosynthesis via de novo pathway; 5-amino-1-(5-phospho-D-ribosyl)imidazole from N(2)-formyl-N(1)-(5-phospho-D-ribosyl)glycinamide: step 2/2.</text>
</comment>
<comment type="subcellular location">
    <subcellularLocation>
        <location evidence="1">Cytoplasm</location>
    </subcellularLocation>
</comment>
<comment type="similarity">
    <text evidence="1">Belongs to the AIR synthase family.</text>
</comment>
<dbReference type="EC" id="6.3.3.1" evidence="1"/>
<dbReference type="EMBL" id="CP000673">
    <property type="protein sequence ID" value="EDK34698.1"/>
    <property type="molecule type" value="Genomic_DNA"/>
</dbReference>
<dbReference type="RefSeq" id="WP_012103028.1">
    <property type="nucleotide sequence ID" value="NC_009706.1"/>
</dbReference>
<dbReference type="SMR" id="A5N0Q2"/>
<dbReference type="STRING" id="431943.CKL_2686"/>
<dbReference type="KEGG" id="ckl:CKL_2686"/>
<dbReference type="eggNOG" id="COG0150">
    <property type="taxonomic scope" value="Bacteria"/>
</dbReference>
<dbReference type="HOGENOM" id="CLU_047116_0_0_9"/>
<dbReference type="UniPathway" id="UPA00074">
    <property type="reaction ID" value="UER00129"/>
</dbReference>
<dbReference type="Proteomes" id="UP000002411">
    <property type="component" value="Chromosome"/>
</dbReference>
<dbReference type="GO" id="GO:0005829">
    <property type="term" value="C:cytosol"/>
    <property type="evidence" value="ECO:0007669"/>
    <property type="project" value="TreeGrafter"/>
</dbReference>
<dbReference type="GO" id="GO:0005524">
    <property type="term" value="F:ATP binding"/>
    <property type="evidence" value="ECO:0007669"/>
    <property type="project" value="UniProtKB-KW"/>
</dbReference>
<dbReference type="GO" id="GO:0004637">
    <property type="term" value="F:phosphoribosylamine-glycine ligase activity"/>
    <property type="evidence" value="ECO:0007669"/>
    <property type="project" value="TreeGrafter"/>
</dbReference>
<dbReference type="GO" id="GO:0004641">
    <property type="term" value="F:phosphoribosylformylglycinamidine cyclo-ligase activity"/>
    <property type="evidence" value="ECO:0007669"/>
    <property type="project" value="UniProtKB-UniRule"/>
</dbReference>
<dbReference type="GO" id="GO:0006189">
    <property type="term" value="P:'de novo' IMP biosynthetic process"/>
    <property type="evidence" value="ECO:0007669"/>
    <property type="project" value="UniProtKB-UniRule"/>
</dbReference>
<dbReference type="GO" id="GO:0046084">
    <property type="term" value="P:adenine biosynthetic process"/>
    <property type="evidence" value="ECO:0007669"/>
    <property type="project" value="TreeGrafter"/>
</dbReference>
<dbReference type="CDD" id="cd02196">
    <property type="entry name" value="PurM"/>
    <property type="match status" value="1"/>
</dbReference>
<dbReference type="FunFam" id="3.30.1330.10:FF:000001">
    <property type="entry name" value="Phosphoribosylformylglycinamidine cyclo-ligase"/>
    <property type="match status" value="1"/>
</dbReference>
<dbReference type="FunFam" id="3.90.650.10:FF:000011">
    <property type="entry name" value="Phosphoribosylformylglycinamidine cyclo-ligase"/>
    <property type="match status" value="1"/>
</dbReference>
<dbReference type="Gene3D" id="3.90.650.10">
    <property type="entry name" value="PurM-like C-terminal domain"/>
    <property type="match status" value="1"/>
</dbReference>
<dbReference type="Gene3D" id="3.30.1330.10">
    <property type="entry name" value="PurM-like, N-terminal domain"/>
    <property type="match status" value="1"/>
</dbReference>
<dbReference type="HAMAP" id="MF_00741">
    <property type="entry name" value="AIRS"/>
    <property type="match status" value="1"/>
</dbReference>
<dbReference type="InterPro" id="IPR010918">
    <property type="entry name" value="PurM-like_C_dom"/>
</dbReference>
<dbReference type="InterPro" id="IPR036676">
    <property type="entry name" value="PurM-like_C_sf"/>
</dbReference>
<dbReference type="InterPro" id="IPR016188">
    <property type="entry name" value="PurM-like_N"/>
</dbReference>
<dbReference type="InterPro" id="IPR036921">
    <property type="entry name" value="PurM-like_N_sf"/>
</dbReference>
<dbReference type="InterPro" id="IPR004733">
    <property type="entry name" value="PurM_cligase"/>
</dbReference>
<dbReference type="NCBIfam" id="TIGR00878">
    <property type="entry name" value="purM"/>
    <property type="match status" value="1"/>
</dbReference>
<dbReference type="PANTHER" id="PTHR10520:SF12">
    <property type="entry name" value="TRIFUNCTIONAL PURINE BIOSYNTHETIC PROTEIN ADENOSINE-3"/>
    <property type="match status" value="1"/>
</dbReference>
<dbReference type="PANTHER" id="PTHR10520">
    <property type="entry name" value="TRIFUNCTIONAL PURINE BIOSYNTHETIC PROTEIN ADENOSINE-3-RELATED"/>
    <property type="match status" value="1"/>
</dbReference>
<dbReference type="Pfam" id="PF00586">
    <property type="entry name" value="AIRS"/>
    <property type="match status" value="1"/>
</dbReference>
<dbReference type="Pfam" id="PF02769">
    <property type="entry name" value="AIRS_C"/>
    <property type="match status" value="1"/>
</dbReference>
<dbReference type="SUPFAM" id="SSF56042">
    <property type="entry name" value="PurM C-terminal domain-like"/>
    <property type="match status" value="1"/>
</dbReference>
<dbReference type="SUPFAM" id="SSF55326">
    <property type="entry name" value="PurM N-terminal domain-like"/>
    <property type="match status" value="1"/>
</dbReference>